<name>TRMA_PSEPK</name>
<dbReference type="EC" id="2.1.1.-" evidence="1"/>
<dbReference type="EC" id="2.1.1.35" evidence="1"/>
<dbReference type="EMBL" id="AE015451">
    <property type="protein sequence ID" value="AAN70227.1"/>
    <property type="molecule type" value="Genomic_DNA"/>
</dbReference>
<dbReference type="RefSeq" id="NP_746763.1">
    <property type="nucleotide sequence ID" value="NC_002947.4"/>
</dbReference>
<dbReference type="RefSeq" id="WP_004575991.1">
    <property type="nucleotide sequence ID" value="NZ_CP169744.1"/>
</dbReference>
<dbReference type="SMR" id="Q88E14"/>
<dbReference type="STRING" id="160488.PP_4654"/>
<dbReference type="PaxDb" id="160488-PP_4654"/>
<dbReference type="GeneID" id="83682362"/>
<dbReference type="KEGG" id="ppu:PP_4654"/>
<dbReference type="PATRIC" id="fig|160488.4.peg.4962"/>
<dbReference type="eggNOG" id="COG2265">
    <property type="taxonomic scope" value="Bacteria"/>
</dbReference>
<dbReference type="HOGENOM" id="CLU_043022_0_0_6"/>
<dbReference type="OrthoDB" id="9804590at2"/>
<dbReference type="PhylomeDB" id="Q88E14"/>
<dbReference type="BioCyc" id="PPUT160488:G1G01-4967-MONOMER"/>
<dbReference type="Proteomes" id="UP000000556">
    <property type="component" value="Chromosome"/>
</dbReference>
<dbReference type="GO" id="GO:0005829">
    <property type="term" value="C:cytosol"/>
    <property type="evidence" value="ECO:0007669"/>
    <property type="project" value="TreeGrafter"/>
</dbReference>
<dbReference type="GO" id="GO:0019843">
    <property type="term" value="F:rRNA binding"/>
    <property type="evidence" value="ECO:0007669"/>
    <property type="project" value="TreeGrafter"/>
</dbReference>
<dbReference type="GO" id="GO:0030697">
    <property type="term" value="F:tRNA (uracil(54)-C5)-methyltransferase activity, S-adenosyl methionine-dependent"/>
    <property type="evidence" value="ECO:0007669"/>
    <property type="project" value="UniProtKB-UniRule"/>
</dbReference>
<dbReference type="GO" id="GO:0000049">
    <property type="term" value="F:tRNA binding"/>
    <property type="evidence" value="ECO:0007669"/>
    <property type="project" value="TreeGrafter"/>
</dbReference>
<dbReference type="GO" id="GO:0030488">
    <property type="term" value="P:tRNA methylation"/>
    <property type="evidence" value="ECO:0007669"/>
    <property type="project" value="UniProtKB-UniRule"/>
</dbReference>
<dbReference type="CDD" id="cd02440">
    <property type="entry name" value="AdoMet_MTases"/>
    <property type="match status" value="1"/>
</dbReference>
<dbReference type="FunFam" id="2.40.50.1070:FF:000001">
    <property type="entry name" value="tRNA/tmRNA (uracil-C(5))-methyltransferase"/>
    <property type="match status" value="1"/>
</dbReference>
<dbReference type="FunFam" id="3.40.50.150:FF:000012">
    <property type="entry name" value="tRNA/tmRNA (uracil-C(5))-methyltransferase"/>
    <property type="match status" value="1"/>
</dbReference>
<dbReference type="Gene3D" id="2.40.50.1070">
    <property type="match status" value="1"/>
</dbReference>
<dbReference type="Gene3D" id="3.40.50.150">
    <property type="entry name" value="Vaccinia Virus protein VP39"/>
    <property type="match status" value="1"/>
</dbReference>
<dbReference type="HAMAP" id="MF_01011">
    <property type="entry name" value="RNA_methyltr_TrmA"/>
    <property type="match status" value="1"/>
</dbReference>
<dbReference type="InterPro" id="IPR030390">
    <property type="entry name" value="MeTrfase_TrmA_AS"/>
</dbReference>
<dbReference type="InterPro" id="IPR030391">
    <property type="entry name" value="MeTrfase_TrmA_CS"/>
</dbReference>
<dbReference type="InterPro" id="IPR029063">
    <property type="entry name" value="SAM-dependent_MTases_sf"/>
</dbReference>
<dbReference type="InterPro" id="IPR011869">
    <property type="entry name" value="TrmA_MeTrfase"/>
</dbReference>
<dbReference type="InterPro" id="IPR010280">
    <property type="entry name" value="U5_MeTrfase_fam"/>
</dbReference>
<dbReference type="NCBIfam" id="TIGR02143">
    <property type="entry name" value="trmA_only"/>
    <property type="match status" value="1"/>
</dbReference>
<dbReference type="PANTHER" id="PTHR47790">
    <property type="entry name" value="TRNA/TMRNA (URACIL-C(5))-METHYLTRANSFERASE"/>
    <property type="match status" value="1"/>
</dbReference>
<dbReference type="PANTHER" id="PTHR47790:SF2">
    <property type="entry name" value="TRNA_TMRNA (URACIL-C(5))-METHYLTRANSFERASE"/>
    <property type="match status" value="1"/>
</dbReference>
<dbReference type="Pfam" id="PF05958">
    <property type="entry name" value="tRNA_U5-meth_tr"/>
    <property type="match status" value="1"/>
</dbReference>
<dbReference type="SUPFAM" id="SSF53335">
    <property type="entry name" value="S-adenosyl-L-methionine-dependent methyltransferases"/>
    <property type="match status" value="1"/>
</dbReference>
<dbReference type="PROSITE" id="PS51687">
    <property type="entry name" value="SAM_MT_RNA_M5U"/>
    <property type="match status" value="1"/>
</dbReference>
<dbReference type="PROSITE" id="PS01230">
    <property type="entry name" value="TRMA_1"/>
    <property type="match status" value="1"/>
</dbReference>
<dbReference type="PROSITE" id="PS01231">
    <property type="entry name" value="TRMA_2"/>
    <property type="match status" value="1"/>
</dbReference>
<reference key="1">
    <citation type="journal article" date="2002" name="Environ. Microbiol.">
        <title>Complete genome sequence and comparative analysis of the metabolically versatile Pseudomonas putida KT2440.</title>
        <authorList>
            <person name="Nelson K.E."/>
            <person name="Weinel C."/>
            <person name="Paulsen I.T."/>
            <person name="Dodson R.J."/>
            <person name="Hilbert H."/>
            <person name="Martins dos Santos V.A.P."/>
            <person name="Fouts D.E."/>
            <person name="Gill S.R."/>
            <person name="Pop M."/>
            <person name="Holmes M."/>
            <person name="Brinkac L.M."/>
            <person name="Beanan M.J."/>
            <person name="DeBoy R.T."/>
            <person name="Daugherty S.C."/>
            <person name="Kolonay J.F."/>
            <person name="Madupu R."/>
            <person name="Nelson W.C."/>
            <person name="White O."/>
            <person name="Peterson J.D."/>
            <person name="Khouri H.M."/>
            <person name="Hance I."/>
            <person name="Chris Lee P."/>
            <person name="Holtzapple E.K."/>
            <person name="Scanlan D."/>
            <person name="Tran K."/>
            <person name="Moazzez A."/>
            <person name="Utterback T.R."/>
            <person name="Rizzo M."/>
            <person name="Lee K."/>
            <person name="Kosack D."/>
            <person name="Moestl D."/>
            <person name="Wedler H."/>
            <person name="Lauber J."/>
            <person name="Stjepandic D."/>
            <person name="Hoheisel J."/>
            <person name="Straetz M."/>
            <person name="Heim S."/>
            <person name="Kiewitz C."/>
            <person name="Eisen J.A."/>
            <person name="Timmis K.N."/>
            <person name="Duesterhoeft A."/>
            <person name="Tuemmler B."/>
            <person name="Fraser C.M."/>
        </authorList>
    </citation>
    <scope>NUCLEOTIDE SEQUENCE [LARGE SCALE GENOMIC DNA]</scope>
    <source>
        <strain>ATCC 47054 / DSM 6125 / CFBP 8728 / NCIMB 11950 / KT2440</strain>
    </source>
</reference>
<accession>Q88E14</accession>
<gene>
    <name evidence="1" type="primary">trmA</name>
    <name type="ordered locus">PP_4654</name>
</gene>
<proteinExistence type="inferred from homology"/>
<evidence type="ECO:0000255" key="1">
    <source>
        <dbReference type="HAMAP-Rule" id="MF_01011"/>
    </source>
</evidence>
<sequence>MSAAFDPSSYATQLDAKVARLRELLAPFGAPEPAVFDSPREHYRLRAEFRLWREDGQRHYAMFAPGEKHKAILIDDFPIASERINALMPRLKAAWQASEELGNRLFQVEFLTTLAGDAMITMCYHRPLDEAWEVEARQLAEALGVSVIGRSKGKRLVIGRDYAVEKLDVAGRVFSYRQPEGAFTQPNGAVNQKMLSWAFEAIGEREDDLLELYCGNGNFTLPLATRVRQVLATEISKTSVNAALSNLDENAVDNVRLVRLSAEELTQALNEVRPFRRLEGIDLKSYQFGTVFVDPPRAGMDPDTCELTRRFERILYISCNPETLAANIAQLQDTHRIERCALFDQFPYTHHMESGVLLVRR</sequence>
<protein>
    <recommendedName>
        <fullName evidence="1">tRNA/tmRNA (uracil-C(5))-methyltransferase</fullName>
        <ecNumber evidence="1">2.1.1.-</ecNumber>
        <ecNumber evidence="1">2.1.1.35</ecNumber>
    </recommendedName>
    <alternativeName>
        <fullName evidence="1">tRNA (uracil(54)-C(5))-methyltransferase</fullName>
    </alternativeName>
    <alternativeName>
        <fullName evidence="1">tRNA(m5U54)-methyltransferase</fullName>
        <shortName evidence="1">RUMT</shortName>
    </alternativeName>
    <alternativeName>
        <fullName evidence="1">tmRNA (uracil(341)-C(5))-methyltransferase</fullName>
    </alternativeName>
</protein>
<organism>
    <name type="scientific">Pseudomonas putida (strain ATCC 47054 / DSM 6125 / CFBP 8728 / NCIMB 11950 / KT2440)</name>
    <dbReference type="NCBI Taxonomy" id="160488"/>
    <lineage>
        <taxon>Bacteria</taxon>
        <taxon>Pseudomonadati</taxon>
        <taxon>Pseudomonadota</taxon>
        <taxon>Gammaproteobacteria</taxon>
        <taxon>Pseudomonadales</taxon>
        <taxon>Pseudomonadaceae</taxon>
        <taxon>Pseudomonas</taxon>
    </lineage>
</organism>
<keyword id="KW-0489">Methyltransferase</keyword>
<keyword id="KW-1185">Reference proteome</keyword>
<keyword id="KW-0949">S-adenosyl-L-methionine</keyword>
<keyword id="KW-0808">Transferase</keyword>
<keyword id="KW-0819">tRNA processing</keyword>
<feature type="chain" id="PRO_0000161874" description="tRNA/tmRNA (uracil-C(5))-methyltransferase">
    <location>
        <begin position="1"/>
        <end position="361"/>
    </location>
</feature>
<feature type="active site" description="Nucleophile" evidence="1">
    <location>
        <position position="319"/>
    </location>
</feature>
<feature type="active site" description="Proton acceptor" evidence="1">
    <location>
        <position position="353"/>
    </location>
</feature>
<feature type="binding site" evidence="1">
    <location>
        <position position="185"/>
    </location>
    <ligand>
        <name>S-adenosyl-L-methionine</name>
        <dbReference type="ChEBI" id="CHEBI:59789"/>
    </ligand>
</feature>
<feature type="binding site" evidence="1">
    <location>
        <position position="213"/>
    </location>
    <ligand>
        <name>S-adenosyl-L-methionine</name>
        <dbReference type="ChEBI" id="CHEBI:59789"/>
    </ligand>
</feature>
<feature type="binding site" evidence="1">
    <location>
        <position position="218"/>
    </location>
    <ligand>
        <name>S-adenosyl-L-methionine</name>
        <dbReference type="ChEBI" id="CHEBI:59789"/>
    </ligand>
</feature>
<feature type="binding site" evidence="1">
    <location>
        <position position="234"/>
    </location>
    <ligand>
        <name>S-adenosyl-L-methionine</name>
        <dbReference type="ChEBI" id="CHEBI:59789"/>
    </ligand>
</feature>
<feature type="binding site" evidence="1">
    <location>
        <position position="294"/>
    </location>
    <ligand>
        <name>S-adenosyl-L-methionine</name>
        <dbReference type="ChEBI" id="CHEBI:59789"/>
    </ligand>
</feature>
<comment type="function">
    <text evidence="1">Dual-specificity methyltransferase that catalyzes the formation of 5-methyluridine at position 54 (m5U54) in all tRNAs, and that of position 341 (m5U341) in tmRNA (transfer-mRNA).</text>
</comment>
<comment type="catalytic activity">
    <reaction evidence="1">
        <text>uridine(54) in tRNA + S-adenosyl-L-methionine = 5-methyluridine(54) in tRNA + S-adenosyl-L-homocysteine + H(+)</text>
        <dbReference type="Rhea" id="RHEA:42712"/>
        <dbReference type="Rhea" id="RHEA-COMP:10167"/>
        <dbReference type="Rhea" id="RHEA-COMP:10193"/>
        <dbReference type="ChEBI" id="CHEBI:15378"/>
        <dbReference type="ChEBI" id="CHEBI:57856"/>
        <dbReference type="ChEBI" id="CHEBI:59789"/>
        <dbReference type="ChEBI" id="CHEBI:65315"/>
        <dbReference type="ChEBI" id="CHEBI:74447"/>
        <dbReference type="EC" id="2.1.1.35"/>
    </reaction>
</comment>
<comment type="catalytic activity">
    <reaction evidence="1">
        <text>uridine(341) in tmRNA + S-adenosyl-L-methionine = 5-methyluridine(341) in tmRNA + S-adenosyl-L-homocysteine + H(+)</text>
        <dbReference type="Rhea" id="RHEA:43612"/>
        <dbReference type="Rhea" id="RHEA-COMP:10630"/>
        <dbReference type="Rhea" id="RHEA-COMP:10631"/>
        <dbReference type="ChEBI" id="CHEBI:15378"/>
        <dbReference type="ChEBI" id="CHEBI:57856"/>
        <dbReference type="ChEBI" id="CHEBI:59789"/>
        <dbReference type="ChEBI" id="CHEBI:65315"/>
        <dbReference type="ChEBI" id="CHEBI:74447"/>
    </reaction>
</comment>
<comment type="similarity">
    <text evidence="1">Belongs to the class I-like SAM-binding methyltransferase superfamily. RNA M5U methyltransferase family. TrmA subfamily.</text>
</comment>